<geneLocation type="mitochondrion"/>
<gene>
    <name type="primary">MT-ND4L</name>
    <name type="synonym">MTND4L</name>
    <name type="synonym">NADH4L</name>
    <name type="synonym">ND4L</name>
</gene>
<sequence>MMSINLNLIMAFSLALAGVLIYRTHLMSTLLCLEGMMLSLFILMALLISHFHMFSVSMAPLVLLVFSACEAGVGLALLVKTSSDYGNDYVQNLNLLQW</sequence>
<reference key="1">
    <citation type="journal article" date="2004" name="Gene">
        <title>Marsupial relationships and a timeline for marsupial radiation in South Gondwana.</title>
        <authorList>
            <person name="Nilsson M.A."/>
            <person name="Arnason U."/>
            <person name="Spencer P.B.S."/>
            <person name="Janke A."/>
        </authorList>
    </citation>
    <scope>NUCLEOTIDE SEQUENCE [GENOMIC DNA]</scope>
    <source>
        <tissue>Liver</tissue>
    </source>
</reference>
<evidence type="ECO:0000250" key="1">
    <source>
        <dbReference type="UniProtKB" id="P03901"/>
    </source>
</evidence>
<evidence type="ECO:0000250" key="2">
    <source>
        <dbReference type="UniProtKB" id="P03902"/>
    </source>
</evidence>
<evidence type="ECO:0000255" key="3"/>
<evidence type="ECO:0000305" key="4"/>
<protein>
    <recommendedName>
        <fullName>NADH-ubiquinone oxidoreductase chain 4L</fullName>
        <ecNumber>7.1.1.2</ecNumber>
    </recommendedName>
    <alternativeName>
        <fullName>NADH dehydrogenase subunit 4L</fullName>
    </alternativeName>
</protein>
<name>NU4LM_PSEPE</name>
<accession>Q5QS45</accession>
<organism>
    <name type="scientific">Pseudocheirus peregrinus</name>
    <name type="common">Common ring-tailed possum</name>
    <dbReference type="NCBI Taxonomy" id="9333"/>
    <lineage>
        <taxon>Eukaryota</taxon>
        <taxon>Metazoa</taxon>
        <taxon>Chordata</taxon>
        <taxon>Craniata</taxon>
        <taxon>Vertebrata</taxon>
        <taxon>Euteleostomi</taxon>
        <taxon>Mammalia</taxon>
        <taxon>Metatheria</taxon>
        <taxon>Diprotodontia</taxon>
        <taxon>Pseudocheiridae</taxon>
        <taxon>Pseudocheirus</taxon>
    </lineage>
</organism>
<comment type="function">
    <text evidence="1">Core subunit of the mitochondrial membrane respiratory chain NADH dehydrogenase (Complex I) which catalyzes electron transfer from NADH through the respiratory chain, using ubiquinone as an electron acceptor. Part of the enzyme membrane arm which is embedded in the lipid bilayer and involved in proton translocation.</text>
</comment>
<comment type="catalytic activity">
    <reaction evidence="1">
        <text>a ubiquinone + NADH + 5 H(+)(in) = a ubiquinol + NAD(+) + 4 H(+)(out)</text>
        <dbReference type="Rhea" id="RHEA:29091"/>
        <dbReference type="Rhea" id="RHEA-COMP:9565"/>
        <dbReference type="Rhea" id="RHEA-COMP:9566"/>
        <dbReference type="ChEBI" id="CHEBI:15378"/>
        <dbReference type="ChEBI" id="CHEBI:16389"/>
        <dbReference type="ChEBI" id="CHEBI:17976"/>
        <dbReference type="ChEBI" id="CHEBI:57540"/>
        <dbReference type="ChEBI" id="CHEBI:57945"/>
        <dbReference type="EC" id="7.1.1.2"/>
    </reaction>
    <physiologicalReaction direction="left-to-right" evidence="1">
        <dbReference type="Rhea" id="RHEA:29092"/>
    </physiologicalReaction>
</comment>
<comment type="subunit">
    <text evidence="2">Core subunit of respiratory chain NADH dehydrogenase (Complex I) which is composed of 45 different subunits.</text>
</comment>
<comment type="subcellular location">
    <subcellularLocation>
        <location evidence="2">Mitochondrion inner membrane</location>
        <topology evidence="3">Multi-pass membrane protein</topology>
    </subcellularLocation>
</comment>
<comment type="similarity">
    <text evidence="4">Belongs to the complex I subunit 4L family.</text>
</comment>
<proteinExistence type="inferred from homology"/>
<dbReference type="EC" id="7.1.1.2"/>
<dbReference type="EMBL" id="AJ639870">
    <property type="protein sequence ID" value="CAG26402.1"/>
    <property type="molecule type" value="Genomic_DNA"/>
</dbReference>
<dbReference type="RefSeq" id="YP_161216.1">
    <property type="nucleotide sequence ID" value="NC_006519.1"/>
</dbReference>
<dbReference type="SMR" id="Q5QS45"/>
<dbReference type="GeneID" id="3187029"/>
<dbReference type="CTD" id="4539"/>
<dbReference type="GO" id="GO:0005743">
    <property type="term" value="C:mitochondrial inner membrane"/>
    <property type="evidence" value="ECO:0000250"/>
    <property type="project" value="UniProtKB"/>
</dbReference>
<dbReference type="GO" id="GO:0045271">
    <property type="term" value="C:respiratory chain complex I"/>
    <property type="evidence" value="ECO:0000250"/>
    <property type="project" value="UniProtKB"/>
</dbReference>
<dbReference type="GO" id="GO:0008137">
    <property type="term" value="F:NADH dehydrogenase (ubiquinone) activity"/>
    <property type="evidence" value="ECO:0000250"/>
    <property type="project" value="UniProtKB"/>
</dbReference>
<dbReference type="GO" id="GO:0042773">
    <property type="term" value="P:ATP synthesis coupled electron transport"/>
    <property type="evidence" value="ECO:0007669"/>
    <property type="project" value="InterPro"/>
</dbReference>
<dbReference type="FunFam" id="1.10.287.3510:FF:000002">
    <property type="entry name" value="NADH-ubiquinone oxidoreductase chain 4L"/>
    <property type="match status" value="1"/>
</dbReference>
<dbReference type="Gene3D" id="1.10.287.3510">
    <property type="match status" value="1"/>
</dbReference>
<dbReference type="InterPro" id="IPR001133">
    <property type="entry name" value="NADH_UbQ_OxRdtase_chain4L/K"/>
</dbReference>
<dbReference type="InterPro" id="IPR039428">
    <property type="entry name" value="NUOK/Mnh_C1-like"/>
</dbReference>
<dbReference type="PANTHER" id="PTHR11434:SF0">
    <property type="entry name" value="NADH-UBIQUINONE OXIDOREDUCTASE CHAIN 4L"/>
    <property type="match status" value="1"/>
</dbReference>
<dbReference type="PANTHER" id="PTHR11434">
    <property type="entry name" value="NADH-UBIQUINONE OXIDOREDUCTASE SUBUNIT ND4L"/>
    <property type="match status" value="1"/>
</dbReference>
<dbReference type="Pfam" id="PF00420">
    <property type="entry name" value="Oxidored_q2"/>
    <property type="match status" value="1"/>
</dbReference>
<feature type="chain" id="PRO_0000275112" description="NADH-ubiquinone oxidoreductase chain 4L">
    <location>
        <begin position="1"/>
        <end position="98"/>
    </location>
</feature>
<feature type="transmembrane region" description="Helical" evidence="3">
    <location>
        <begin position="1"/>
        <end position="21"/>
    </location>
</feature>
<feature type="transmembrane region" description="Helical" evidence="3">
    <location>
        <begin position="28"/>
        <end position="48"/>
    </location>
</feature>
<feature type="transmembrane region" description="Helical" evidence="3">
    <location>
        <begin position="59"/>
        <end position="79"/>
    </location>
</feature>
<keyword id="KW-0249">Electron transport</keyword>
<keyword id="KW-0472">Membrane</keyword>
<keyword id="KW-0496">Mitochondrion</keyword>
<keyword id="KW-0999">Mitochondrion inner membrane</keyword>
<keyword id="KW-0520">NAD</keyword>
<keyword id="KW-0679">Respiratory chain</keyword>
<keyword id="KW-1278">Translocase</keyword>
<keyword id="KW-0812">Transmembrane</keyword>
<keyword id="KW-1133">Transmembrane helix</keyword>
<keyword id="KW-0813">Transport</keyword>
<keyword id="KW-0830">Ubiquinone</keyword>